<evidence type="ECO:0000255" key="1">
    <source>
        <dbReference type="HAMAP-Rule" id="MF_00265"/>
    </source>
</evidence>
<gene>
    <name evidence="1" type="primary">vapC3</name>
    <name type="ordered locus">APE_1102</name>
</gene>
<comment type="function">
    <text evidence="1">Toxic component of a type II toxin-antitoxin (TA) system. An RNase.</text>
</comment>
<comment type="cofactor">
    <cofactor evidence="1">
        <name>Mg(2+)</name>
        <dbReference type="ChEBI" id="CHEBI:18420"/>
    </cofactor>
</comment>
<comment type="similarity">
    <text evidence="1">Belongs to the PINc/VapC protein family.</text>
</comment>
<dbReference type="EC" id="3.1.-.-" evidence="1"/>
<dbReference type="EMBL" id="BA000002">
    <property type="protein sequence ID" value="BAA80087.1"/>
    <property type="molecule type" value="Genomic_DNA"/>
</dbReference>
<dbReference type="PIR" id="G72710">
    <property type="entry name" value="G72710"/>
</dbReference>
<dbReference type="RefSeq" id="WP_010866172.1">
    <property type="nucleotide sequence ID" value="NC_000854.2"/>
</dbReference>
<dbReference type="SMR" id="Q9YD10"/>
<dbReference type="STRING" id="272557.APE_1102"/>
<dbReference type="EnsemblBacteria" id="BAA80087">
    <property type="protein sequence ID" value="BAA80087"/>
    <property type="gene ID" value="APE_1102"/>
</dbReference>
<dbReference type="GeneID" id="1445790"/>
<dbReference type="KEGG" id="ape:APE_1102"/>
<dbReference type="eggNOG" id="arCOG00721">
    <property type="taxonomic scope" value="Archaea"/>
</dbReference>
<dbReference type="Proteomes" id="UP000002518">
    <property type="component" value="Chromosome"/>
</dbReference>
<dbReference type="GO" id="GO:0030688">
    <property type="term" value="C:preribosome, small subunit precursor"/>
    <property type="evidence" value="ECO:0007669"/>
    <property type="project" value="TreeGrafter"/>
</dbReference>
<dbReference type="GO" id="GO:0000287">
    <property type="term" value="F:magnesium ion binding"/>
    <property type="evidence" value="ECO:0007669"/>
    <property type="project" value="UniProtKB-UniRule"/>
</dbReference>
<dbReference type="GO" id="GO:0004521">
    <property type="term" value="F:RNA endonuclease activity"/>
    <property type="evidence" value="ECO:0007669"/>
    <property type="project" value="TreeGrafter"/>
</dbReference>
<dbReference type="GO" id="GO:0030490">
    <property type="term" value="P:maturation of SSU-rRNA"/>
    <property type="evidence" value="ECO:0007669"/>
    <property type="project" value="TreeGrafter"/>
</dbReference>
<dbReference type="CDD" id="cd09876">
    <property type="entry name" value="PIN_Nob1-like"/>
    <property type="match status" value="1"/>
</dbReference>
<dbReference type="Gene3D" id="3.40.50.1010">
    <property type="entry name" value="5'-nuclease"/>
    <property type="match status" value="1"/>
</dbReference>
<dbReference type="HAMAP" id="MF_00265">
    <property type="entry name" value="VapC_Nob1"/>
    <property type="match status" value="1"/>
</dbReference>
<dbReference type="InterPro" id="IPR039907">
    <property type="entry name" value="NOB1"/>
</dbReference>
<dbReference type="InterPro" id="IPR029060">
    <property type="entry name" value="PIN-like_dom_sf"/>
</dbReference>
<dbReference type="InterPro" id="IPR002716">
    <property type="entry name" value="PIN_dom"/>
</dbReference>
<dbReference type="InterPro" id="IPR033411">
    <property type="entry name" value="Ribonuclease_PIN"/>
</dbReference>
<dbReference type="InterPro" id="IPR022907">
    <property type="entry name" value="VapC_family"/>
</dbReference>
<dbReference type="PANTHER" id="PTHR12814">
    <property type="entry name" value="RNA-BINDING PROTEIN NOB1"/>
    <property type="match status" value="1"/>
</dbReference>
<dbReference type="PANTHER" id="PTHR12814:SF2">
    <property type="entry name" value="RNA-BINDING PROTEIN NOB1"/>
    <property type="match status" value="1"/>
</dbReference>
<dbReference type="Pfam" id="PF17146">
    <property type="entry name" value="PIN_6"/>
    <property type="match status" value="1"/>
</dbReference>
<dbReference type="SMART" id="SM00670">
    <property type="entry name" value="PINc"/>
    <property type="match status" value="1"/>
</dbReference>
<dbReference type="SUPFAM" id="SSF88723">
    <property type="entry name" value="PIN domain-like"/>
    <property type="match status" value="1"/>
</dbReference>
<reference key="1">
    <citation type="journal article" date="1999" name="DNA Res.">
        <title>Complete genome sequence of an aerobic hyper-thermophilic crenarchaeon, Aeropyrum pernix K1.</title>
        <authorList>
            <person name="Kawarabayasi Y."/>
            <person name="Hino Y."/>
            <person name="Horikawa H."/>
            <person name="Yamazaki S."/>
            <person name="Haikawa Y."/>
            <person name="Jin-no K."/>
            <person name="Takahashi M."/>
            <person name="Sekine M."/>
            <person name="Baba S."/>
            <person name="Ankai A."/>
            <person name="Kosugi H."/>
            <person name="Hosoyama A."/>
            <person name="Fukui S."/>
            <person name="Nagai Y."/>
            <person name="Nishijima K."/>
            <person name="Nakazawa H."/>
            <person name="Takamiya M."/>
            <person name="Masuda S."/>
            <person name="Funahashi T."/>
            <person name="Tanaka T."/>
            <person name="Kudoh Y."/>
            <person name="Yamazaki J."/>
            <person name="Kushida N."/>
            <person name="Oguchi A."/>
            <person name="Aoki K."/>
            <person name="Kubota K."/>
            <person name="Nakamura Y."/>
            <person name="Nomura N."/>
            <person name="Sako Y."/>
            <person name="Kikuchi H."/>
        </authorList>
    </citation>
    <scope>NUCLEOTIDE SEQUENCE [LARGE SCALE GENOMIC DNA]</scope>
    <source>
        <strain>ATCC 700893 / DSM 11879 / JCM 9820 / NBRC 100138 / K1</strain>
    </source>
</reference>
<reference key="2">
    <citation type="journal article" date="2005" name="Nucleic Acids Res.">
        <title>Toxin-antitoxin loci are highly abundant in free-living but lost from host-associated prokaryotes.</title>
        <authorList>
            <person name="Pandey D.P."/>
            <person name="Gerdes K."/>
        </authorList>
    </citation>
    <scope>POSSIBLE FUNCTION</scope>
    <source>
        <strain>ATCC 700893 / DSM 11879 / JCM 9820 / NBRC 100138 / K1</strain>
    </source>
</reference>
<feature type="chain" id="PRO_0000156043" description="Ribonuclease VapC3">
    <location>
        <begin position="1"/>
        <end position="139"/>
    </location>
</feature>
<feature type="domain" description="PINc" evidence="1">
    <location>
        <begin position="14"/>
        <end position="121"/>
    </location>
</feature>
<feature type="binding site" evidence="1">
    <location>
        <position position="19"/>
    </location>
    <ligand>
        <name>Mg(2+)</name>
        <dbReference type="ChEBI" id="CHEBI:18420"/>
    </ligand>
</feature>
<name>VAPC3_AERPE</name>
<protein>
    <recommendedName>
        <fullName evidence="1">Ribonuclease VapC3</fullName>
        <shortName evidence="1">RNase VapC3</shortName>
        <ecNumber evidence="1">3.1.-.-</ecNumber>
    </recommendedName>
    <alternativeName>
        <fullName evidence="1">Putative toxin VapC3</fullName>
    </alternativeName>
</protein>
<sequence>MRGSTQGCSPTGREAIVLDTGAFIAGKAAALPGRLATPPRVLEEVRDRGSRSLLELLQSTGRLEVLAPSTRALERAREEARRAGVLGRLSGADLEVLALALDLAWQGCRVAVATDDYTLQRLAARLGLGVVRLRYRGAV</sequence>
<organism>
    <name type="scientific">Aeropyrum pernix (strain ATCC 700893 / DSM 11879 / JCM 9820 / NBRC 100138 / K1)</name>
    <dbReference type="NCBI Taxonomy" id="272557"/>
    <lineage>
        <taxon>Archaea</taxon>
        <taxon>Thermoproteota</taxon>
        <taxon>Thermoprotei</taxon>
        <taxon>Desulfurococcales</taxon>
        <taxon>Desulfurococcaceae</taxon>
        <taxon>Aeropyrum</taxon>
    </lineage>
</organism>
<keyword id="KW-0378">Hydrolase</keyword>
<keyword id="KW-0460">Magnesium</keyword>
<keyword id="KW-0479">Metal-binding</keyword>
<keyword id="KW-0540">Nuclease</keyword>
<keyword id="KW-1185">Reference proteome</keyword>
<keyword id="KW-1277">Toxin-antitoxin system</keyword>
<proteinExistence type="inferred from homology"/>
<accession>Q9YD10</accession>